<protein>
    <recommendedName>
        <fullName evidence="1">Small ribosomal subunit protein uS17</fullName>
    </recommendedName>
    <alternativeName>
        <fullName evidence="2">30S ribosomal protein S17</fullName>
    </alternativeName>
</protein>
<sequence length="87" mass="10189">MSERNQRKVYTGRVVSDKMDKTITVLVETYKTHSLYGKRVKYSKKYKAHDEQNQAKLGDIVKIMETRPLSATKRFRLVEIVEEAVII</sequence>
<accession>Q73F87</accession>
<proteinExistence type="inferred from homology"/>
<organism>
    <name type="scientific">Bacillus cereus (strain ATCC 10987 / NRS 248)</name>
    <dbReference type="NCBI Taxonomy" id="222523"/>
    <lineage>
        <taxon>Bacteria</taxon>
        <taxon>Bacillati</taxon>
        <taxon>Bacillota</taxon>
        <taxon>Bacilli</taxon>
        <taxon>Bacillales</taxon>
        <taxon>Bacillaceae</taxon>
        <taxon>Bacillus</taxon>
        <taxon>Bacillus cereus group</taxon>
    </lineage>
</organism>
<dbReference type="EMBL" id="AE017194">
    <property type="protein sequence ID" value="AAS39055.1"/>
    <property type="molecule type" value="Genomic_DNA"/>
</dbReference>
<dbReference type="SMR" id="Q73F87"/>
<dbReference type="KEGG" id="bca:BCE_0119"/>
<dbReference type="HOGENOM" id="CLU_073626_1_0_9"/>
<dbReference type="Proteomes" id="UP000002527">
    <property type="component" value="Chromosome"/>
</dbReference>
<dbReference type="GO" id="GO:0022627">
    <property type="term" value="C:cytosolic small ribosomal subunit"/>
    <property type="evidence" value="ECO:0007669"/>
    <property type="project" value="TreeGrafter"/>
</dbReference>
<dbReference type="GO" id="GO:0019843">
    <property type="term" value="F:rRNA binding"/>
    <property type="evidence" value="ECO:0007669"/>
    <property type="project" value="UniProtKB-UniRule"/>
</dbReference>
<dbReference type="GO" id="GO:0003735">
    <property type="term" value="F:structural constituent of ribosome"/>
    <property type="evidence" value="ECO:0007669"/>
    <property type="project" value="InterPro"/>
</dbReference>
<dbReference type="GO" id="GO:0006412">
    <property type="term" value="P:translation"/>
    <property type="evidence" value="ECO:0007669"/>
    <property type="project" value="UniProtKB-UniRule"/>
</dbReference>
<dbReference type="CDD" id="cd00364">
    <property type="entry name" value="Ribosomal_uS17"/>
    <property type="match status" value="1"/>
</dbReference>
<dbReference type="FunFam" id="2.40.50.140:FF:000026">
    <property type="entry name" value="30S ribosomal protein S17"/>
    <property type="match status" value="1"/>
</dbReference>
<dbReference type="Gene3D" id="2.40.50.140">
    <property type="entry name" value="Nucleic acid-binding proteins"/>
    <property type="match status" value="1"/>
</dbReference>
<dbReference type="HAMAP" id="MF_01345_B">
    <property type="entry name" value="Ribosomal_uS17_B"/>
    <property type="match status" value="1"/>
</dbReference>
<dbReference type="InterPro" id="IPR012340">
    <property type="entry name" value="NA-bd_OB-fold"/>
</dbReference>
<dbReference type="InterPro" id="IPR000266">
    <property type="entry name" value="Ribosomal_uS17"/>
</dbReference>
<dbReference type="InterPro" id="IPR019984">
    <property type="entry name" value="Ribosomal_uS17_bact/chlr"/>
</dbReference>
<dbReference type="InterPro" id="IPR019979">
    <property type="entry name" value="Ribosomal_uS17_CS"/>
</dbReference>
<dbReference type="NCBIfam" id="NF004123">
    <property type="entry name" value="PRK05610.1"/>
    <property type="match status" value="1"/>
</dbReference>
<dbReference type="NCBIfam" id="TIGR03635">
    <property type="entry name" value="uS17_bact"/>
    <property type="match status" value="1"/>
</dbReference>
<dbReference type="PANTHER" id="PTHR10744">
    <property type="entry name" value="40S RIBOSOMAL PROTEIN S11 FAMILY MEMBER"/>
    <property type="match status" value="1"/>
</dbReference>
<dbReference type="PANTHER" id="PTHR10744:SF1">
    <property type="entry name" value="SMALL RIBOSOMAL SUBUNIT PROTEIN US17M"/>
    <property type="match status" value="1"/>
</dbReference>
<dbReference type="Pfam" id="PF00366">
    <property type="entry name" value="Ribosomal_S17"/>
    <property type="match status" value="1"/>
</dbReference>
<dbReference type="PRINTS" id="PR00973">
    <property type="entry name" value="RIBOSOMALS17"/>
</dbReference>
<dbReference type="SUPFAM" id="SSF50249">
    <property type="entry name" value="Nucleic acid-binding proteins"/>
    <property type="match status" value="1"/>
</dbReference>
<dbReference type="PROSITE" id="PS00056">
    <property type="entry name" value="RIBOSOMAL_S17"/>
    <property type="match status" value="1"/>
</dbReference>
<name>RS17_BACC1</name>
<gene>
    <name evidence="1" type="primary">rpsQ</name>
    <name type="ordered locus">BCE_0119</name>
</gene>
<keyword id="KW-0687">Ribonucleoprotein</keyword>
<keyword id="KW-0689">Ribosomal protein</keyword>
<keyword id="KW-0694">RNA-binding</keyword>
<keyword id="KW-0699">rRNA-binding</keyword>
<comment type="function">
    <text evidence="1">One of the primary rRNA binding proteins, it binds specifically to the 5'-end of 16S ribosomal RNA.</text>
</comment>
<comment type="subunit">
    <text evidence="1">Part of the 30S ribosomal subunit.</text>
</comment>
<comment type="similarity">
    <text evidence="1">Belongs to the universal ribosomal protein uS17 family.</text>
</comment>
<reference key="1">
    <citation type="journal article" date="2004" name="Nucleic Acids Res.">
        <title>The genome sequence of Bacillus cereus ATCC 10987 reveals metabolic adaptations and a large plasmid related to Bacillus anthracis pXO1.</title>
        <authorList>
            <person name="Rasko D.A."/>
            <person name="Ravel J."/>
            <person name="Oekstad O.A."/>
            <person name="Helgason E."/>
            <person name="Cer R.Z."/>
            <person name="Jiang L."/>
            <person name="Shores K.A."/>
            <person name="Fouts D.E."/>
            <person name="Tourasse N.J."/>
            <person name="Angiuoli S.V."/>
            <person name="Kolonay J.F."/>
            <person name="Nelson W.C."/>
            <person name="Kolstoe A.-B."/>
            <person name="Fraser C.M."/>
            <person name="Read T.D."/>
        </authorList>
    </citation>
    <scope>NUCLEOTIDE SEQUENCE [LARGE SCALE GENOMIC DNA]</scope>
    <source>
        <strain>ATCC 10987 / NRS 248</strain>
    </source>
</reference>
<evidence type="ECO:0000255" key="1">
    <source>
        <dbReference type="HAMAP-Rule" id="MF_01345"/>
    </source>
</evidence>
<evidence type="ECO:0000305" key="2"/>
<feature type="chain" id="PRO_0000233419" description="Small ribosomal subunit protein uS17">
    <location>
        <begin position="1"/>
        <end position="87"/>
    </location>
</feature>